<keyword id="KW-0997">Cell inner membrane</keyword>
<keyword id="KW-1003">Cell membrane</keyword>
<keyword id="KW-0472">Membrane</keyword>
<keyword id="KW-0627">Porphyrin biosynthesis</keyword>
<keyword id="KW-1185">Reference proteome</keyword>
<keyword id="KW-0677">Repeat</keyword>
<keyword id="KW-0802">TPR repeat</keyword>
<keyword id="KW-0812">Transmembrane</keyword>
<keyword id="KW-1133">Transmembrane helix</keyword>
<comment type="function">
    <text evidence="1">Involved in a late step of protoheme IX synthesis.</text>
</comment>
<comment type="pathway">
    <text>Porphyrin-containing compound metabolism; protoheme biosynthesis.</text>
</comment>
<comment type="subcellular location">
    <subcellularLocation>
        <location evidence="1">Cell inner membrane</location>
        <topology evidence="1">Multi-pass membrane protein</topology>
    </subcellularLocation>
</comment>
<evidence type="ECO:0000250" key="1"/>
<evidence type="ECO:0000255" key="2"/>
<protein>
    <recommendedName>
        <fullName>Protein HemY</fullName>
    </recommendedName>
</protein>
<dbReference type="EMBL" id="AE005174">
    <property type="protein sequence ID" value="AAG58994.1"/>
    <property type="molecule type" value="Genomic_DNA"/>
</dbReference>
<dbReference type="EMBL" id="BA000007">
    <property type="protein sequence ID" value="BAB38155.1"/>
    <property type="molecule type" value="Genomic_DNA"/>
</dbReference>
<dbReference type="PIR" id="D91220">
    <property type="entry name" value="D91220"/>
</dbReference>
<dbReference type="PIR" id="F86066">
    <property type="entry name" value="F86066"/>
</dbReference>
<dbReference type="RefSeq" id="NP_312759.1">
    <property type="nucleotide sequence ID" value="NC_002695.1"/>
</dbReference>
<dbReference type="RefSeq" id="WP_000921791.1">
    <property type="nucleotide sequence ID" value="NZ_VOAI01000017.1"/>
</dbReference>
<dbReference type="SMR" id="P0ACB9"/>
<dbReference type="STRING" id="155864.Z5316"/>
<dbReference type="GeneID" id="915180"/>
<dbReference type="GeneID" id="93778142"/>
<dbReference type="KEGG" id="ece:Z5316"/>
<dbReference type="KEGG" id="ecs:ECs_4732"/>
<dbReference type="PATRIC" id="fig|386585.9.peg.4938"/>
<dbReference type="eggNOG" id="COG3071">
    <property type="taxonomic scope" value="Bacteria"/>
</dbReference>
<dbReference type="HOGENOM" id="CLU_037501_2_0_6"/>
<dbReference type="OMA" id="QAYIGLM"/>
<dbReference type="UniPathway" id="UPA00252"/>
<dbReference type="Proteomes" id="UP000000558">
    <property type="component" value="Chromosome"/>
</dbReference>
<dbReference type="Proteomes" id="UP000002519">
    <property type="component" value="Chromosome"/>
</dbReference>
<dbReference type="GO" id="GO:0005886">
    <property type="term" value="C:plasma membrane"/>
    <property type="evidence" value="ECO:0007669"/>
    <property type="project" value="UniProtKB-SubCell"/>
</dbReference>
<dbReference type="GO" id="GO:0042168">
    <property type="term" value="P:heme metabolic process"/>
    <property type="evidence" value="ECO:0007669"/>
    <property type="project" value="InterPro"/>
</dbReference>
<dbReference type="GO" id="GO:0006779">
    <property type="term" value="P:porphyrin-containing compound biosynthetic process"/>
    <property type="evidence" value="ECO:0007669"/>
    <property type="project" value="UniProtKB-KW"/>
</dbReference>
<dbReference type="Gene3D" id="1.25.40.10">
    <property type="entry name" value="Tetratricopeptide repeat domain"/>
    <property type="match status" value="2"/>
</dbReference>
<dbReference type="InterPro" id="IPR005254">
    <property type="entry name" value="Heme_biosyn_assoc_TPR_pro"/>
</dbReference>
<dbReference type="InterPro" id="IPR010817">
    <property type="entry name" value="HemY_N"/>
</dbReference>
<dbReference type="InterPro" id="IPR011990">
    <property type="entry name" value="TPR-like_helical_dom_sf"/>
</dbReference>
<dbReference type="InterPro" id="IPR013105">
    <property type="entry name" value="TPR_2"/>
</dbReference>
<dbReference type="InterPro" id="IPR019734">
    <property type="entry name" value="TPR_rpt"/>
</dbReference>
<dbReference type="NCBIfam" id="NF008017">
    <property type="entry name" value="PRK10747.1"/>
    <property type="match status" value="1"/>
</dbReference>
<dbReference type="NCBIfam" id="TIGR00540">
    <property type="entry name" value="TPR_hemY_coli"/>
    <property type="match status" value="1"/>
</dbReference>
<dbReference type="Pfam" id="PF07219">
    <property type="entry name" value="HemY_N"/>
    <property type="match status" value="1"/>
</dbReference>
<dbReference type="Pfam" id="PF07719">
    <property type="entry name" value="TPR_2"/>
    <property type="match status" value="1"/>
</dbReference>
<dbReference type="SUPFAM" id="SSF48452">
    <property type="entry name" value="TPR-like"/>
    <property type="match status" value="1"/>
</dbReference>
<dbReference type="PROSITE" id="PS50005">
    <property type="entry name" value="TPR"/>
    <property type="match status" value="2"/>
</dbReference>
<dbReference type="PROSITE" id="PS50293">
    <property type="entry name" value="TPR_REGION"/>
    <property type="match status" value="1"/>
</dbReference>
<organism>
    <name type="scientific">Escherichia coli O157:H7</name>
    <dbReference type="NCBI Taxonomy" id="83334"/>
    <lineage>
        <taxon>Bacteria</taxon>
        <taxon>Pseudomonadati</taxon>
        <taxon>Pseudomonadota</taxon>
        <taxon>Gammaproteobacteria</taxon>
        <taxon>Enterobacterales</taxon>
        <taxon>Enterobacteriaceae</taxon>
        <taxon>Escherichia</taxon>
    </lineage>
</organism>
<sequence length="398" mass="45245">MLKVLLLFVLLIAGIVVGPMIAGHQGYVLIQTDNYNIETSVTGLAIILILAMVVLFAIEWLLRRIFRTGAHTRGWFVGRKRRRARKQTEQALLKLAEGDYQQVEKLMAKNADHAEQPVVNYLLAAEAAQQRGDEARANQHLERAAELAGNDTIPVEITRVRLQLARNENHAARHGVDKLLEVTPRHPEVLRLAEQAYIRTGAWSSLLDIIPSMAKAHVGDEEHRAMLEQQAWIGLMDQARADNGSEGLRNWWKNQSRKTRHQVALQVAMAEHLIECDDHDTAQQIIIDGLKRQYDDRLLLPIPRLKTNNPEQLEKVLRQQIKNVGDRPLLWSTLGQSLMKHGEWQEASLAFRAALKQRPDAYDYAWLADALDRLHKPEEAAAMRRDGLMLTLQNNPPQ</sequence>
<reference key="1">
    <citation type="journal article" date="2001" name="Nature">
        <title>Genome sequence of enterohaemorrhagic Escherichia coli O157:H7.</title>
        <authorList>
            <person name="Perna N.T."/>
            <person name="Plunkett G. III"/>
            <person name="Burland V."/>
            <person name="Mau B."/>
            <person name="Glasner J.D."/>
            <person name="Rose D.J."/>
            <person name="Mayhew G.F."/>
            <person name="Evans P.S."/>
            <person name="Gregor J."/>
            <person name="Kirkpatrick H.A."/>
            <person name="Posfai G."/>
            <person name="Hackett J."/>
            <person name="Klink S."/>
            <person name="Boutin A."/>
            <person name="Shao Y."/>
            <person name="Miller L."/>
            <person name="Grotbeck E.J."/>
            <person name="Davis N.W."/>
            <person name="Lim A."/>
            <person name="Dimalanta E.T."/>
            <person name="Potamousis K."/>
            <person name="Apodaca J."/>
            <person name="Anantharaman T.S."/>
            <person name="Lin J."/>
            <person name="Yen G."/>
            <person name="Schwartz D.C."/>
            <person name="Welch R.A."/>
            <person name="Blattner F.R."/>
        </authorList>
    </citation>
    <scope>NUCLEOTIDE SEQUENCE [LARGE SCALE GENOMIC DNA]</scope>
    <source>
        <strain>O157:H7 / EDL933 / ATCC 700927 / EHEC</strain>
    </source>
</reference>
<reference key="2">
    <citation type="journal article" date="2001" name="DNA Res.">
        <title>Complete genome sequence of enterohemorrhagic Escherichia coli O157:H7 and genomic comparison with a laboratory strain K-12.</title>
        <authorList>
            <person name="Hayashi T."/>
            <person name="Makino K."/>
            <person name="Ohnishi M."/>
            <person name="Kurokawa K."/>
            <person name="Ishii K."/>
            <person name="Yokoyama K."/>
            <person name="Han C.-G."/>
            <person name="Ohtsubo E."/>
            <person name="Nakayama K."/>
            <person name="Murata T."/>
            <person name="Tanaka M."/>
            <person name="Tobe T."/>
            <person name="Iida T."/>
            <person name="Takami H."/>
            <person name="Honda T."/>
            <person name="Sasakawa C."/>
            <person name="Ogasawara N."/>
            <person name="Yasunaga T."/>
            <person name="Kuhara S."/>
            <person name="Shiba T."/>
            <person name="Hattori M."/>
            <person name="Shinagawa H."/>
        </authorList>
    </citation>
    <scope>NUCLEOTIDE SEQUENCE [LARGE SCALE GENOMIC DNA]</scope>
    <source>
        <strain>O157:H7 / Sakai / RIMD 0509952 / EHEC</strain>
    </source>
</reference>
<proteinExistence type="inferred from homology"/>
<name>HEMY_ECO57</name>
<gene>
    <name type="primary">hemY</name>
    <name type="ordered locus">Z5316</name>
    <name type="ordered locus">ECs4732</name>
</gene>
<feature type="chain" id="PRO_0000135276" description="Protein HemY">
    <location>
        <begin position="1"/>
        <end position="398"/>
    </location>
</feature>
<feature type="topological domain" description="Cytoplasmic" evidence="2">
    <location>
        <begin position="1"/>
        <end position="4"/>
    </location>
</feature>
<feature type="transmembrane region" description="Helical" evidence="2">
    <location>
        <begin position="5"/>
        <end position="27"/>
    </location>
</feature>
<feature type="topological domain" description="Periplasmic" evidence="2">
    <location>
        <begin position="28"/>
        <end position="39"/>
    </location>
</feature>
<feature type="transmembrane region" description="Helical" evidence="2">
    <location>
        <begin position="40"/>
        <end position="62"/>
    </location>
</feature>
<feature type="topological domain" description="Cytoplasmic" evidence="2">
    <location>
        <begin position="63"/>
        <end position="398"/>
    </location>
</feature>
<feature type="repeat" description="TPR 1">
    <location>
        <begin position="118"/>
        <end position="151"/>
    </location>
</feature>
<feature type="repeat" description="TPR 2">
    <location>
        <begin position="328"/>
        <end position="361"/>
    </location>
</feature>
<accession>P0ACB9</accession>
<accession>P09128</accession>